<organism>
    <name type="scientific">Gloeobacter violaceus (strain ATCC 29082 / PCC 7421)</name>
    <dbReference type="NCBI Taxonomy" id="251221"/>
    <lineage>
        <taxon>Bacteria</taxon>
        <taxon>Bacillati</taxon>
        <taxon>Cyanobacteriota</taxon>
        <taxon>Cyanophyceae</taxon>
        <taxon>Gloeobacterales</taxon>
        <taxon>Gloeobacteraceae</taxon>
        <taxon>Gloeobacter</taxon>
    </lineage>
</organism>
<proteinExistence type="inferred from homology"/>
<accession>Q7NIT2</accession>
<evidence type="ECO:0000255" key="1">
    <source>
        <dbReference type="HAMAP-Rule" id="MF_01611"/>
    </source>
</evidence>
<evidence type="ECO:0000255" key="2">
    <source>
        <dbReference type="PROSITE-ProRule" id="PRU01266"/>
    </source>
</evidence>
<keyword id="KW-0004">4Fe-4S</keyword>
<keyword id="KW-0408">Iron</keyword>
<keyword id="KW-0411">Iron-sulfur</keyword>
<keyword id="KW-0456">Lyase</keyword>
<keyword id="KW-0479">Metal-binding</keyword>
<keyword id="KW-1185">Reference proteome</keyword>
<keyword id="KW-0949">S-adenosyl-L-methionine</keyword>
<comment type="function">
    <text evidence="1">Catalyzes the radical-mediated synthesis of 7,8-didemethyl-8-hydroxy-5-deazariboflavin from 5-amino-5-(4-hydroxybenzyl)-6-(D-ribitylimino)-5,6-dihydrouracil.</text>
</comment>
<comment type="catalytic activity">
    <reaction evidence="1">
        <text>5-amino-5-(4-hydroxybenzyl)-6-(D-ribitylimino)-5,6-dihydrouracil + S-adenosyl-L-methionine = 7,8-didemethyl-8-hydroxy-5-deazariboflavin + 5'-deoxyadenosine + L-methionine + NH4(+) + H(+)</text>
        <dbReference type="Rhea" id="RHEA:55204"/>
        <dbReference type="ChEBI" id="CHEBI:15378"/>
        <dbReference type="ChEBI" id="CHEBI:17319"/>
        <dbReference type="ChEBI" id="CHEBI:28938"/>
        <dbReference type="ChEBI" id="CHEBI:57844"/>
        <dbReference type="ChEBI" id="CHEBI:59789"/>
        <dbReference type="ChEBI" id="CHEBI:59904"/>
        <dbReference type="ChEBI" id="CHEBI:85936"/>
        <dbReference type="EC" id="4.3.1.32"/>
    </reaction>
</comment>
<comment type="cofactor">
    <cofactor evidence="1">
        <name>[4Fe-4S] cluster</name>
        <dbReference type="ChEBI" id="CHEBI:49883"/>
    </cofactor>
    <text evidence="1">Binds 1 [4Fe-4S] cluster. The cluster is coordinated with 3 cysteines and an exchangeable S-adenosyl-L-methionine.</text>
</comment>
<comment type="pathway">
    <text evidence="1">Cofactor biosynthesis; coenzyme F0 biosynthesis.</text>
</comment>
<comment type="subunit">
    <text evidence="1">Consists of two subunits, CofG and CofH.</text>
</comment>
<comment type="similarity">
    <text evidence="1">Belongs to the radical SAM superfamily. CofG family.</text>
</comment>
<reference key="1">
    <citation type="journal article" date="2003" name="DNA Res.">
        <title>Complete genome structure of Gloeobacter violaceus PCC 7421, a cyanobacterium that lacks thylakoids.</title>
        <authorList>
            <person name="Nakamura Y."/>
            <person name="Kaneko T."/>
            <person name="Sato S."/>
            <person name="Mimuro M."/>
            <person name="Miyashita H."/>
            <person name="Tsuchiya T."/>
            <person name="Sasamoto S."/>
            <person name="Watanabe A."/>
            <person name="Kawashima K."/>
            <person name="Kishida Y."/>
            <person name="Kiyokawa C."/>
            <person name="Kohara M."/>
            <person name="Matsumoto M."/>
            <person name="Matsuno A."/>
            <person name="Nakazaki N."/>
            <person name="Shimpo S."/>
            <person name="Takeuchi C."/>
            <person name="Yamada M."/>
            <person name="Tabata S."/>
        </authorList>
    </citation>
    <scope>NUCLEOTIDE SEQUENCE [LARGE SCALE GENOMIC DNA]</scope>
    <source>
        <strain>ATCC 29082 / PCC 7421</strain>
    </source>
</reference>
<gene>
    <name evidence="1" type="primary">cofG</name>
    <name type="ordered locus">gll2100</name>
</gene>
<feature type="chain" id="PRO_0000147756" description="7,8-didemethyl-8-hydroxy-5-deazariboflavin synthase">
    <location>
        <begin position="1"/>
        <end position="319"/>
    </location>
</feature>
<feature type="domain" description="Radical SAM core" evidence="2">
    <location>
        <begin position="6"/>
        <end position="236"/>
    </location>
</feature>
<feature type="binding site" evidence="1">
    <location>
        <position position="20"/>
    </location>
    <ligand>
        <name>[4Fe-4S] cluster</name>
        <dbReference type="ChEBI" id="CHEBI:49883"/>
        <note>4Fe-4S-S-AdoMet</note>
    </ligand>
</feature>
<feature type="binding site" evidence="1">
    <location>
        <position position="24"/>
    </location>
    <ligand>
        <name>[4Fe-4S] cluster</name>
        <dbReference type="ChEBI" id="CHEBI:49883"/>
        <note>4Fe-4S-S-AdoMet</note>
    </ligand>
</feature>
<feature type="binding site" evidence="1">
    <location>
        <position position="27"/>
    </location>
    <ligand>
        <name>[4Fe-4S] cluster</name>
        <dbReference type="ChEBI" id="CHEBI:49883"/>
        <note>4Fe-4S-S-AdoMet</note>
    </ligand>
</feature>
<protein>
    <recommendedName>
        <fullName evidence="1">7,8-didemethyl-8-hydroxy-5-deazariboflavin synthase</fullName>
        <ecNumber evidence="1">4.3.1.32</ecNumber>
    </recommendedName>
    <alternativeName>
        <fullName evidence="1">FO synthase subunit 1</fullName>
    </alternativeName>
</protein>
<dbReference type="EC" id="4.3.1.32" evidence="1"/>
<dbReference type="EMBL" id="BA000045">
    <property type="protein sequence ID" value="BAC90041.1"/>
    <property type="molecule type" value="Genomic_DNA"/>
</dbReference>
<dbReference type="RefSeq" id="NP_925046.1">
    <property type="nucleotide sequence ID" value="NC_005125.1"/>
</dbReference>
<dbReference type="RefSeq" id="WP_011142098.1">
    <property type="nucleotide sequence ID" value="NC_005125.1"/>
</dbReference>
<dbReference type="SMR" id="Q7NIT2"/>
<dbReference type="STRING" id="251221.gene:10759594"/>
<dbReference type="EnsemblBacteria" id="BAC90041">
    <property type="protein sequence ID" value="BAC90041"/>
    <property type="gene ID" value="BAC90041"/>
</dbReference>
<dbReference type="KEGG" id="gvi:gll2100"/>
<dbReference type="PATRIC" id="fig|251221.4.peg.2135"/>
<dbReference type="eggNOG" id="COG1060">
    <property type="taxonomic scope" value="Bacteria"/>
</dbReference>
<dbReference type="HOGENOM" id="CLU_054174_0_0_3"/>
<dbReference type="InParanoid" id="Q7NIT2"/>
<dbReference type="OrthoDB" id="9802027at2"/>
<dbReference type="PhylomeDB" id="Q7NIT2"/>
<dbReference type="UniPathway" id="UPA00072"/>
<dbReference type="Proteomes" id="UP000000557">
    <property type="component" value="Chromosome"/>
</dbReference>
<dbReference type="GO" id="GO:0051539">
    <property type="term" value="F:4 iron, 4 sulfur cluster binding"/>
    <property type="evidence" value="ECO:0007669"/>
    <property type="project" value="UniProtKB-KW"/>
</dbReference>
<dbReference type="GO" id="GO:0044689">
    <property type="term" value="F:7,8-didemethyl-8-hydroxy-5-deazariboflavin synthase activity"/>
    <property type="evidence" value="ECO:0000318"/>
    <property type="project" value="GO_Central"/>
</dbReference>
<dbReference type="GO" id="GO:0005506">
    <property type="term" value="F:iron ion binding"/>
    <property type="evidence" value="ECO:0007669"/>
    <property type="project" value="UniProtKB-UniRule"/>
</dbReference>
<dbReference type="GO" id="GO:0016765">
    <property type="term" value="F:transferase activity, transferring alkyl or aryl (other than methyl) groups"/>
    <property type="evidence" value="ECO:0007669"/>
    <property type="project" value="InterPro"/>
</dbReference>
<dbReference type="CDD" id="cd01335">
    <property type="entry name" value="Radical_SAM"/>
    <property type="match status" value="1"/>
</dbReference>
<dbReference type="Gene3D" id="3.20.20.70">
    <property type="entry name" value="Aldolase class I"/>
    <property type="match status" value="1"/>
</dbReference>
<dbReference type="HAMAP" id="MF_01611">
    <property type="entry name" value="FO_synth_sub1"/>
    <property type="match status" value="1"/>
</dbReference>
<dbReference type="InterPro" id="IPR013785">
    <property type="entry name" value="Aldolase_TIM"/>
</dbReference>
<dbReference type="InterPro" id="IPR019939">
    <property type="entry name" value="CofG_family"/>
</dbReference>
<dbReference type="InterPro" id="IPR006638">
    <property type="entry name" value="Elp3/MiaA/NifB-like_rSAM"/>
</dbReference>
<dbReference type="InterPro" id="IPR034405">
    <property type="entry name" value="F420"/>
</dbReference>
<dbReference type="InterPro" id="IPR007197">
    <property type="entry name" value="rSAM"/>
</dbReference>
<dbReference type="NCBIfam" id="TIGR03550">
    <property type="entry name" value="F420_cofG"/>
    <property type="match status" value="1"/>
</dbReference>
<dbReference type="NCBIfam" id="NF004884">
    <property type="entry name" value="PRK06245.1"/>
    <property type="match status" value="1"/>
</dbReference>
<dbReference type="PANTHER" id="PTHR43076:SF15">
    <property type="entry name" value="7,8-DIDEMETHYL-8-HYDROXY-5-DEAZARIBOFLAVIN SYNTHASE"/>
    <property type="match status" value="1"/>
</dbReference>
<dbReference type="PANTHER" id="PTHR43076">
    <property type="entry name" value="FO SYNTHASE (COFH)"/>
    <property type="match status" value="1"/>
</dbReference>
<dbReference type="Pfam" id="PF04055">
    <property type="entry name" value="Radical_SAM"/>
    <property type="match status" value="1"/>
</dbReference>
<dbReference type="SFLD" id="SFLDF00294">
    <property type="entry name" value="7_8-didemethyl-8-hydroxy-5-dea"/>
    <property type="match status" value="1"/>
</dbReference>
<dbReference type="SFLD" id="SFLDG01064">
    <property type="entry name" value="F420__menaquinone_cofactor_bio"/>
    <property type="match status" value="1"/>
</dbReference>
<dbReference type="SMART" id="SM00729">
    <property type="entry name" value="Elp3"/>
    <property type="match status" value="1"/>
</dbReference>
<dbReference type="SUPFAM" id="SSF102114">
    <property type="entry name" value="Radical SAM enzymes"/>
    <property type="match status" value="1"/>
</dbReference>
<dbReference type="PROSITE" id="PS51918">
    <property type="entry name" value="RADICAL_SAM"/>
    <property type="match status" value="1"/>
</dbReference>
<name>COFG_GLOVI</name>
<sequence length="319" mass="34751">MRERTVTYSPAFTLVPTRECFNRCGYCNFRADRGAAWLQPAEVRALLLPLVGSGVVEILVLSGEVHPHDPRRGEWFAMIEDICAVALELGFLPHTNCGVLSFEEMRALQQLNVSLGLMLEIDSNRLLGGVHRHAPSKIPALRTAQLEWAGALGIPFTTGLLLGIGETPAEREDTLRTIARLQDRHGHIQEVILQPHSPGGSQSWAGEPLGDAQLLGVVRLARQILPAEITIQIPPNLVGDPVPLLEAGARDLGGIGPVDVVNPDYAHPVVERLGERLAAAGWRLEPRLPVYPHLDKRVATALQPLLGEHRARLCQAAVT</sequence>